<dbReference type="EMBL" id="CP000488">
    <property type="protein sequence ID" value="ABL02631.1"/>
    <property type="molecule type" value="Genomic_DNA"/>
</dbReference>
<dbReference type="RefSeq" id="WP_011738256.1">
    <property type="nucleotide sequence ID" value="NC_008610.1"/>
</dbReference>
<dbReference type="SMR" id="A1AXH4"/>
<dbReference type="STRING" id="413404.Rmag_0918"/>
<dbReference type="KEGG" id="rma:Rmag_0918"/>
<dbReference type="eggNOG" id="COG0211">
    <property type="taxonomic scope" value="Bacteria"/>
</dbReference>
<dbReference type="HOGENOM" id="CLU_095424_4_0_6"/>
<dbReference type="OrthoDB" id="9803474at2"/>
<dbReference type="Proteomes" id="UP000002587">
    <property type="component" value="Chromosome"/>
</dbReference>
<dbReference type="GO" id="GO:0022625">
    <property type="term" value="C:cytosolic large ribosomal subunit"/>
    <property type="evidence" value="ECO:0007669"/>
    <property type="project" value="TreeGrafter"/>
</dbReference>
<dbReference type="GO" id="GO:0003735">
    <property type="term" value="F:structural constituent of ribosome"/>
    <property type="evidence" value="ECO:0007669"/>
    <property type="project" value="InterPro"/>
</dbReference>
<dbReference type="GO" id="GO:0006412">
    <property type="term" value="P:translation"/>
    <property type="evidence" value="ECO:0007669"/>
    <property type="project" value="UniProtKB-UniRule"/>
</dbReference>
<dbReference type="FunFam" id="2.40.50.100:FF:000020">
    <property type="entry name" value="50S ribosomal protein L27"/>
    <property type="match status" value="1"/>
</dbReference>
<dbReference type="Gene3D" id="2.40.50.100">
    <property type="match status" value="1"/>
</dbReference>
<dbReference type="HAMAP" id="MF_00539">
    <property type="entry name" value="Ribosomal_bL27"/>
    <property type="match status" value="1"/>
</dbReference>
<dbReference type="InterPro" id="IPR001684">
    <property type="entry name" value="Ribosomal_bL27"/>
</dbReference>
<dbReference type="InterPro" id="IPR018261">
    <property type="entry name" value="Ribosomal_bL27_CS"/>
</dbReference>
<dbReference type="NCBIfam" id="TIGR00062">
    <property type="entry name" value="L27"/>
    <property type="match status" value="1"/>
</dbReference>
<dbReference type="PANTHER" id="PTHR15893:SF0">
    <property type="entry name" value="LARGE RIBOSOMAL SUBUNIT PROTEIN BL27M"/>
    <property type="match status" value="1"/>
</dbReference>
<dbReference type="PANTHER" id="PTHR15893">
    <property type="entry name" value="RIBOSOMAL PROTEIN L27"/>
    <property type="match status" value="1"/>
</dbReference>
<dbReference type="Pfam" id="PF01016">
    <property type="entry name" value="Ribosomal_L27"/>
    <property type="match status" value="1"/>
</dbReference>
<dbReference type="PRINTS" id="PR00063">
    <property type="entry name" value="RIBOSOMALL27"/>
</dbReference>
<dbReference type="SUPFAM" id="SSF110324">
    <property type="entry name" value="Ribosomal L27 protein-like"/>
    <property type="match status" value="1"/>
</dbReference>
<dbReference type="PROSITE" id="PS00831">
    <property type="entry name" value="RIBOSOMAL_L27"/>
    <property type="match status" value="1"/>
</dbReference>
<organism>
    <name type="scientific">Ruthia magnifica subsp. Calyptogena magnifica</name>
    <dbReference type="NCBI Taxonomy" id="413404"/>
    <lineage>
        <taxon>Bacteria</taxon>
        <taxon>Pseudomonadati</taxon>
        <taxon>Pseudomonadota</taxon>
        <taxon>Gammaproteobacteria</taxon>
        <taxon>Candidatus Pseudothioglobaceae</taxon>
        <taxon>Candidatus Ruthturnera</taxon>
    </lineage>
</organism>
<sequence>MAHKKAGGSTNNGRDSVSKRLGVKRFGGQVVLSGNILVRQRGTKFHPGTNVRKGKDDTLFATMDGKVIFAKKGKFMHQYVSIETA</sequence>
<proteinExistence type="inferred from homology"/>
<comment type="similarity">
    <text evidence="1">Belongs to the bacterial ribosomal protein bL27 family.</text>
</comment>
<feature type="chain" id="PRO_1000017591" description="Large ribosomal subunit protein bL27">
    <location>
        <begin position="1"/>
        <end position="85"/>
    </location>
</feature>
<gene>
    <name evidence="1" type="primary">rpmA</name>
    <name type="ordered locus">Rmag_0918</name>
</gene>
<keyword id="KW-0687">Ribonucleoprotein</keyword>
<keyword id="KW-0689">Ribosomal protein</keyword>
<evidence type="ECO:0000255" key="1">
    <source>
        <dbReference type="HAMAP-Rule" id="MF_00539"/>
    </source>
</evidence>
<evidence type="ECO:0000305" key="2"/>
<name>RL27_RUTMC</name>
<protein>
    <recommendedName>
        <fullName evidence="1">Large ribosomal subunit protein bL27</fullName>
    </recommendedName>
    <alternativeName>
        <fullName evidence="2">50S ribosomal protein L27</fullName>
    </alternativeName>
</protein>
<reference key="1">
    <citation type="journal article" date="2007" name="Science">
        <title>The Calyptogena magnifica chemoautotrophic symbiont genome.</title>
        <authorList>
            <person name="Newton I.L.G."/>
            <person name="Woyke T."/>
            <person name="Auchtung T.A."/>
            <person name="Dilly G.F."/>
            <person name="Dutton R.J."/>
            <person name="Fisher M.C."/>
            <person name="Fontanez K.M."/>
            <person name="Lau E."/>
            <person name="Stewart F.J."/>
            <person name="Richardson P.M."/>
            <person name="Barry K.W."/>
            <person name="Saunders E."/>
            <person name="Detter J.C."/>
            <person name="Wu D."/>
            <person name="Eisen J.A."/>
            <person name="Cavanaugh C.M."/>
        </authorList>
    </citation>
    <scope>NUCLEOTIDE SEQUENCE [LARGE SCALE GENOMIC DNA]</scope>
</reference>
<accession>A1AXH4</accession>